<keyword id="KW-0004">4Fe-4S</keyword>
<keyword id="KW-0408">Iron</keyword>
<keyword id="KW-0411">Iron-sulfur</keyword>
<keyword id="KW-0479">Metal-binding</keyword>
<keyword id="KW-1185">Reference proteome</keyword>
<organism>
    <name type="scientific">Drosophila ananassae</name>
    <name type="common">Fruit fly</name>
    <dbReference type="NCBI Taxonomy" id="7217"/>
    <lineage>
        <taxon>Eukaryota</taxon>
        <taxon>Metazoa</taxon>
        <taxon>Ecdysozoa</taxon>
        <taxon>Arthropoda</taxon>
        <taxon>Hexapoda</taxon>
        <taxon>Insecta</taxon>
        <taxon>Pterygota</taxon>
        <taxon>Neoptera</taxon>
        <taxon>Endopterygota</taxon>
        <taxon>Diptera</taxon>
        <taxon>Brachycera</taxon>
        <taxon>Muscomorpha</taxon>
        <taxon>Ephydroidea</taxon>
        <taxon>Drosophilidae</taxon>
        <taxon>Drosophila</taxon>
        <taxon>Sophophora</taxon>
    </lineage>
</organism>
<protein>
    <recommendedName>
        <fullName>Probable cytosolic Fe-S cluster assembly factor GF22738</fullName>
    </recommendedName>
</protein>
<accession>B3N018</accession>
<dbReference type="EMBL" id="CH902638">
    <property type="protein sequence ID" value="EDV35384.1"/>
    <property type="molecule type" value="Genomic_DNA"/>
</dbReference>
<dbReference type="SMR" id="B3N018"/>
<dbReference type="FunCoup" id="B3N018">
    <property type="interactions" value="492"/>
</dbReference>
<dbReference type="STRING" id="7217.B3N018"/>
<dbReference type="EnsemblMetazoa" id="FBtr0127438">
    <property type="protein sequence ID" value="FBpp0125930"/>
    <property type="gene ID" value="FBgn0099732"/>
</dbReference>
<dbReference type="EnsemblMetazoa" id="XM_001966867.4">
    <property type="protein sequence ID" value="XP_001966903.1"/>
    <property type="gene ID" value="LOC6505392"/>
</dbReference>
<dbReference type="GeneID" id="6505392"/>
<dbReference type="KEGG" id="dan:6505392"/>
<dbReference type="eggNOG" id="KOG2439">
    <property type="taxonomic scope" value="Eukaryota"/>
</dbReference>
<dbReference type="HOGENOM" id="CLU_018240_0_0_1"/>
<dbReference type="InParanoid" id="B3N018"/>
<dbReference type="OMA" id="GYLHHVL"/>
<dbReference type="OrthoDB" id="10253113at2759"/>
<dbReference type="PhylomeDB" id="B3N018"/>
<dbReference type="Proteomes" id="UP000007801">
    <property type="component" value="Unassembled WGS sequence"/>
</dbReference>
<dbReference type="GO" id="GO:0051539">
    <property type="term" value="F:4 iron, 4 sulfur cluster binding"/>
    <property type="evidence" value="ECO:0007669"/>
    <property type="project" value="UniProtKB-KW"/>
</dbReference>
<dbReference type="GO" id="GO:0046872">
    <property type="term" value="F:metal ion binding"/>
    <property type="evidence" value="ECO:0007669"/>
    <property type="project" value="UniProtKB-KW"/>
</dbReference>
<dbReference type="GO" id="GO:0016226">
    <property type="term" value="P:iron-sulfur cluster assembly"/>
    <property type="evidence" value="ECO:0000250"/>
    <property type="project" value="UniProtKB"/>
</dbReference>
<dbReference type="FunFam" id="3.30.70.20:FF:000042">
    <property type="entry name" value="Cytosolic Fe-S cluster assembly factor NAR1"/>
    <property type="match status" value="1"/>
</dbReference>
<dbReference type="Gene3D" id="3.40.50.1780">
    <property type="match status" value="1"/>
</dbReference>
<dbReference type="Gene3D" id="3.40.950.10">
    <property type="entry name" value="Fe-only Hydrogenase (Larger Subunit), Chain L, domain 3"/>
    <property type="match status" value="1"/>
</dbReference>
<dbReference type="InterPro" id="IPR050340">
    <property type="entry name" value="Cytosolic_Fe-S_CAF"/>
</dbReference>
<dbReference type="InterPro" id="IPR009016">
    <property type="entry name" value="Fe_hydrogenase"/>
</dbReference>
<dbReference type="InterPro" id="IPR004108">
    <property type="entry name" value="Fe_hydrogenase_lsu_C"/>
</dbReference>
<dbReference type="InterPro" id="IPR003149">
    <property type="entry name" value="Fe_hydrogenase_ssu"/>
</dbReference>
<dbReference type="PANTHER" id="PTHR11615">
    <property type="entry name" value="NITRATE, FORMATE, IRON DEHYDROGENASE"/>
    <property type="match status" value="1"/>
</dbReference>
<dbReference type="Pfam" id="PF02906">
    <property type="entry name" value="Fe_hyd_lg_C"/>
    <property type="match status" value="1"/>
</dbReference>
<dbReference type="Pfam" id="PF02256">
    <property type="entry name" value="Fe_hyd_SSU"/>
    <property type="match status" value="1"/>
</dbReference>
<dbReference type="SMART" id="SM00902">
    <property type="entry name" value="Fe_hyd_SSU"/>
    <property type="match status" value="1"/>
</dbReference>
<dbReference type="SUPFAM" id="SSF53920">
    <property type="entry name" value="Fe-only hydrogenase"/>
    <property type="match status" value="1"/>
</dbReference>
<evidence type="ECO:0000250" key="1"/>
<evidence type="ECO:0000255" key="2"/>
<evidence type="ECO:0000305" key="3"/>
<proteinExistence type="inferred from homology"/>
<name>NARF_DROAN</name>
<gene>
    <name type="ORF">GF22738</name>
</gene>
<reference key="1">
    <citation type="journal article" date="2007" name="Nature">
        <title>Evolution of genes and genomes on the Drosophila phylogeny.</title>
        <authorList>
            <consortium name="Drosophila 12 genomes consortium"/>
        </authorList>
    </citation>
    <scope>NUCLEOTIDE SEQUENCE [LARGE SCALE GENOMIC DNA]</scope>
    <source>
        <strain>Tucson 14024-0371.13</strain>
    </source>
</reference>
<feature type="chain" id="PRO_0000383699" description="Probable cytosolic Fe-S cluster assembly factor GF22738">
    <location>
        <begin position="1"/>
        <end position="476"/>
    </location>
</feature>
<feature type="binding site" evidence="2">
    <location>
        <position position="23"/>
    </location>
    <ligand>
        <name>[4Fe-4S] cluster</name>
        <dbReference type="ChEBI" id="CHEBI:49883"/>
        <label>1</label>
    </ligand>
</feature>
<feature type="binding site" evidence="2">
    <location>
        <position position="68"/>
    </location>
    <ligand>
        <name>[4Fe-4S] cluster</name>
        <dbReference type="ChEBI" id="CHEBI:49883"/>
        <label>1</label>
    </ligand>
</feature>
<feature type="binding site" evidence="2">
    <location>
        <position position="71"/>
    </location>
    <ligand>
        <name>[4Fe-4S] cluster</name>
        <dbReference type="ChEBI" id="CHEBI:49883"/>
        <label>1</label>
    </ligand>
</feature>
<feature type="binding site" evidence="2">
    <location>
        <position position="74"/>
    </location>
    <ligand>
        <name>[4Fe-4S] cluster</name>
        <dbReference type="ChEBI" id="CHEBI:49883"/>
        <label>1</label>
    </ligand>
</feature>
<feature type="binding site" evidence="2">
    <location>
        <position position="187"/>
    </location>
    <ligand>
        <name>[4Fe-4S] cluster</name>
        <dbReference type="ChEBI" id="CHEBI:49883"/>
        <label>2</label>
    </ligand>
</feature>
<feature type="binding site" evidence="2">
    <location>
        <position position="243"/>
    </location>
    <ligand>
        <name>[4Fe-4S] cluster</name>
        <dbReference type="ChEBI" id="CHEBI:49883"/>
        <label>2</label>
    </ligand>
</feature>
<feature type="binding site" evidence="2">
    <location>
        <position position="395"/>
    </location>
    <ligand>
        <name>[4Fe-4S] cluster</name>
        <dbReference type="ChEBI" id="CHEBI:49883"/>
        <label>2</label>
    </ligand>
</feature>
<feature type="binding site" evidence="2">
    <location>
        <position position="399"/>
    </location>
    <ligand>
        <name>[4Fe-4S] cluster</name>
        <dbReference type="ChEBI" id="CHEBI:49883"/>
        <label>2</label>
    </ligand>
</feature>
<sequence length="476" mass="54053">MSRFSGALQLTDIDDFITPAQECIKPIPINKKNSKSGAKISVQEDGYYEESGTGKQKLQKLEITLQDCLACSGCITSAEGVLITQQSQEELLKVLHENKKLKAEEDNNLSRTVVFSVATQPLISLAYRYKISVEETARHLAGYFRSLGADYVLSTKVADDLALLECRNEFLEKYRENNDLTMFSSSCPGWVCYAEKTHGNFILPHIATTRSPQQIMGVLVKQYLGKKLNLPASRIYHVTVMPCYDKKLEASREDFFSEVNASRDVDCVITSVEVEQMLLEVDQTLPAQEPADLDWPWWDERPELMVYSHESTYSGGYAEHVFRFAARELFNDARPIQLQIDQPRNRDLKEFFLEKDGIVLLRFAIANGFKNIQNLVQKLKRGKGSKFHFVEIMACPSGCINGGAQVRPISGQHVRELTQKLEELYTKLPRSQPDNIGTKKLYDDFFDGFGTDKSHNLLHTSYHSVDKLIPALNIKW</sequence>
<comment type="function">
    <text evidence="1">Component of the cytosolic iron-sulfur (Fe/S) protein assembly machinery. Required for maturation of extramitochondrial Fe/S proteins (By similarity).</text>
</comment>
<comment type="similarity">
    <text evidence="3">Belongs to the NARF family.</text>
</comment>